<accession>Q47587</accession>
<feature type="chain" id="PRO_0000149733" description="HTH-type transcriptional regulator RdgA">
    <location>
        <begin position="1"/>
        <end position="244"/>
    </location>
</feature>
<feature type="domain" description="HTH cro/C1-type" evidence="1">
    <location>
        <begin position="9"/>
        <end position="62"/>
    </location>
</feature>
<feature type="DNA-binding region" description="H-T-H motif" evidence="1">
    <location>
        <begin position="20"/>
        <end position="39"/>
    </location>
</feature>
<gene>
    <name type="primary">rdgA</name>
</gene>
<protein>
    <recommendedName>
        <fullName>HTH-type transcriptional regulator RdgA</fullName>
    </recommendedName>
</protein>
<name>RDGA_PECCC</name>
<keyword id="KW-0238">DNA-binding</keyword>
<keyword id="KW-0804">Transcription</keyword>
<keyword id="KW-0805">Transcription regulation</keyword>
<evidence type="ECO:0000255" key="1">
    <source>
        <dbReference type="PROSITE-ProRule" id="PRU00257"/>
    </source>
</evidence>
<dbReference type="EMBL" id="L32173">
    <property type="protein sequence ID" value="AAA24865.1"/>
    <property type="molecule type" value="Genomic_DNA"/>
</dbReference>
<dbReference type="PIR" id="S61398">
    <property type="entry name" value="S61398"/>
</dbReference>
<dbReference type="GO" id="GO:0003677">
    <property type="term" value="F:DNA binding"/>
    <property type="evidence" value="ECO:0007669"/>
    <property type="project" value="UniProtKB-KW"/>
</dbReference>
<dbReference type="CDD" id="cd00093">
    <property type="entry name" value="HTH_XRE"/>
    <property type="match status" value="1"/>
</dbReference>
<dbReference type="CDD" id="cd06529">
    <property type="entry name" value="S24_LexA-like"/>
    <property type="match status" value="1"/>
</dbReference>
<dbReference type="Gene3D" id="1.10.260.40">
    <property type="entry name" value="lambda repressor-like DNA-binding domains"/>
    <property type="match status" value="1"/>
</dbReference>
<dbReference type="Gene3D" id="2.10.109.10">
    <property type="entry name" value="Umud Fragment, subunit A"/>
    <property type="match status" value="1"/>
</dbReference>
<dbReference type="InterPro" id="IPR001387">
    <property type="entry name" value="Cro/C1-type_HTH"/>
</dbReference>
<dbReference type="InterPro" id="IPR010982">
    <property type="entry name" value="Lambda_DNA-bd_dom_sf"/>
</dbReference>
<dbReference type="InterPro" id="IPR039418">
    <property type="entry name" value="LexA-like"/>
</dbReference>
<dbReference type="InterPro" id="IPR036286">
    <property type="entry name" value="LexA/Signal_pep-like_sf"/>
</dbReference>
<dbReference type="InterPro" id="IPR015927">
    <property type="entry name" value="Peptidase_S24_S26A/B/C"/>
</dbReference>
<dbReference type="PANTHER" id="PTHR40661">
    <property type="match status" value="1"/>
</dbReference>
<dbReference type="PANTHER" id="PTHR40661:SF2">
    <property type="entry name" value="HTH-TYPE TRANSCRIPTIONAL REGULATOR PRTR"/>
    <property type="match status" value="1"/>
</dbReference>
<dbReference type="Pfam" id="PF01381">
    <property type="entry name" value="HTH_3"/>
    <property type="match status" value="1"/>
</dbReference>
<dbReference type="Pfam" id="PF00717">
    <property type="entry name" value="Peptidase_S24"/>
    <property type="match status" value="1"/>
</dbReference>
<dbReference type="SMART" id="SM00530">
    <property type="entry name" value="HTH_XRE"/>
    <property type="match status" value="1"/>
</dbReference>
<dbReference type="SUPFAM" id="SSF47413">
    <property type="entry name" value="lambda repressor-like DNA-binding domains"/>
    <property type="match status" value="1"/>
</dbReference>
<dbReference type="SUPFAM" id="SSF51306">
    <property type="entry name" value="LexA/Signal peptidase"/>
    <property type="match status" value="1"/>
</dbReference>
<dbReference type="PROSITE" id="PS50943">
    <property type="entry name" value="HTH_CROC1"/>
    <property type="match status" value="1"/>
</dbReference>
<reference key="1">
    <citation type="journal article" date="1994" name="Mol. Microbiol.">
        <title>Nucleotide sequence, organization and expression of rdgA and rdgB genes that regulate pectin lyase production in the plant pathogenic bacterium Erwinia carotovora subsp. carotovora in response to DNA-damaging agents.</title>
        <authorList>
            <person name="Liu Y."/>
            <person name="Chatterjee A."/>
            <person name="Chatterjee A.K."/>
        </authorList>
    </citation>
    <scope>NUCLEOTIDE SEQUENCE [GENOMIC DNA]</scope>
    <source>
        <strain>71</strain>
    </source>
</reference>
<comment type="function">
    <text>Regulates pectin lyase production in response to DNA damage.</text>
</comment>
<sequence length="244" mass="26785">MKTTLAERLKTARTAQGLSQKALGDMIGVSQAAIQKIEVGKASQTTKIVELSNNLRVRPEWLANGEGPMRSSEVTRSLQEPSIPPKSEWGTVSAWDSTTELSEDEVEVPFLKDIEFACGDGRIQSEDYNGFKLRFSKATLRKVGANTDGSGVLCFPAAGDSMEPIIPDGTTVAVDTNNKRIIDGKLYAIAQEGGGNDKLKRIKQLYRKPGGLLTIHSFNRETDEEAYESDVEIIGRVFWYSVLL</sequence>
<organism>
    <name type="scientific">Pectobacterium carotovorum subsp. carotovorum</name>
    <name type="common">Erwinia carotovora subsp. carotovora</name>
    <dbReference type="NCBI Taxonomy" id="555"/>
    <lineage>
        <taxon>Bacteria</taxon>
        <taxon>Pseudomonadati</taxon>
        <taxon>Pseudomonadota</taxon>
        <taxon>Gammaproteobacteria</taxon>
        <taxon>Enterobacterales</taxon>
        <taxon>Pectobacteriaceae</taxon>
        <taxon>Pectobacterium</taxon>
    </lineage>
</organism>
<proteinExistence type="predicted"/>